<keyword id="KW-0963">Cytoplasm</keyword>
<keyword id="KW-0690">Ribosome biogenesis</keyword>
<accession>Q6G4W8</accession>
<reference key="1">
    <citation type="journal article" date="2004" name="Proc. Natl. Acad. Sci. U.S.A.">
        <title>The louse-borne human pathogen Bartonella quintana is a genomic derivative of the zoonotic agent Bartonella henselae.</title>
        <authorList>
            <person name="Alsmark U.C.M."/>
            <person name="Frank A.C."/>
            <person name="Karlberg E.O."/>
            <person name="Legault B.-A."/>
            <person name="Ardell D.H."/>
            <person name="Canbaeck B."/>
            <person name="Eriksson A.-S."/>
            <person name="Naeslund A.K."/>
            <person name="Handley S.A."/>
            <person name="Huvet M."/>
            <person name="La Scola B."/>
            <person name="Holmberg M."/>
            <person name="Andersson S.G.E."/>
        </authorList>
    </citation>
    <scope>NUCLEOTIDE SEQUENCE [LARGE SCALE GENOMIC DNA]</scope>
    <source>
        <strain>ATCC 49882 / DSM 28221 / CCUG 30454 / Houston 1</strain>
    </source>
</reference>
<gene>
    <name evidence="1" type="primary">rbfA</name>
    <name type="ordered locus">BH02140</name>
</gene>
<comment type="function">
    <text evidence="1">One of several proteins that assist in the late maturation steps of the functional core of the 30S ribosomal subunit. Associates with free 30S ribosomal subunits (but not with 30S subunits that are part of 70S ribosomes or polysomes). Required for efficient processing of 16S rRNA. May interact with the 5'-terminal helix region of 16S rRNA.</text>
</comment>
<comment type="subunit">
    <text evidence="1">Monomer. Binds 30S ribosomal subunits, but not 50S ribosomal subunits or 70S ribosomes.</text>
</comment>
<comment type="subcellular location">
    <subcellularLocation>
        <location evidence="1">Cytoplasm</location>
    </subcellularLocation>
</comment>
<comment type="similarity">
    <text evidence="1">Belongs to the RbfA family.</text>
</comment>
<organism>
    <name type="scientific">Bartonella henselae (strain ATCC 49882 / DSM 28221 / CCUG 30454 / Houston 1)</name>
    <name type="common">Rochalimaea henselae</name>
    <dbReference type="NCBI Taxonomy" id="283166"/>
    <lineage>
        <taxon>Bacteria</taxon>
        <taxon>Pseudomonadati</taxon>
        <taxon>Pseudomonadota</taxon>
        <taxon>Alphaproteobacteria</taxon>
        <taxon>Hyphomicrobiales</taxon>
        <taxon>Bartonellaceae</taxon>
        <taxon>Bartonella</taxon>
    </lineage>
</organism>
<protein>
    <recommendedName>
        <fullName evidence="1">Ribosome-binding factor A</fullName>
    </recommendedName>
</protein>
<proteinExistence type="inferred from homology"/>
<dbReference type="EMBL" id="BX897699">
    <property type="protein sequence ID" value="CAF27026.1"/>
    <property type="molecule type" value="Genomic_DNA"/>
</dbReference>
<dbReference type="RefSeq" id="WP_011180165.1">
    <property type="nucleotide sequence ID" value="NZ_LRIJ02000001.1"/>
</dbReference>
<dbReference type="SMR" id="Q6G4W8"/>
<dbReference type="PaxDb" id="283166-BH02140"/>
<dbReference type="EnsemblBacteria" id="CAF27026">
    <property type="protein sequence ID" value="CAF27026"/>
    <property type="gene ID" value="BH02140"/>
</dbReference>
<dbReference type="GeneID" id="92984881"/>
<dbReference type="KEGG" id="bhe:BH02140"/>
<dbReference type="eggNOG" id="COG0858">
    <property type="taxonomic scope" value="Bacteria"/>
</dbReference>
<dbReference type="OrthoDB" id="9805051at2"/>
<dbReference type="Proteomes" id="UP000000421">
    <property type="component" value="Chromosome"/>
</dbReference>
<dbReference type="GO" id="GO:0005829">
    <property type="term" value="C:cytosol"/>
    <property type="evidence" value="ECO:0007669"/>
    <property type="project" value="TreeGrafter"/>
</dbReference>
<dbReference type="GO" id="GO:0043024">
    <property type="term" value="F:ribosomal small subunit binding"/>
    <property type="evidence" value="ECO:0007669"/>
    <property type="project" value="TreeGrafter"/>
</dbReference>
<dbReference type="GO" id="GO:0030490">
    <property type="term" value="P:maturation of SSU-rRNA"/>
    <property type="evidence" value="ECO:0007669"/>
    <property type="project" value="UniProtKB-UniRule"/>
</dbReference>
<dbReference type="Gene3D" id="3.30.300.20">
    <property type="match status" value="1"/>
</dbReference>
<dbReference type="HAMAP" id="MF_00003">
    <property type="entry name" value="RbfA"/>
    <property type="match status" value="1"/>
</dbReference>
<dbReference type="InterPro" id="IPR015946">
    <property type="entry name" value="KH_dom-like_a/b"/>
</dbReference>
<dbReference type="InterPro" id="IPR000238">
    <property type="entry name" value="RbfA"/>
</dbReference>
<dbReference type="InterPro" id="IPR023799">
    <property type="entry name" value="RbfA_dom_sf"/>
</dbReference>
<dbReference type="InterPro" id="IPR020053">
    <property type="entry name" value="Ribosome-bd_factorA_CS"/>
</dbReference>
<dbReference type="NCBIfam" id="NF001802">
    <property type="entry name" value="PRK00521.2-5"/>
    <property type="match status" value="1"/>
</dbReference>
<dbReference type="NCBIfam" id="TIGR00082">
    <property type="entry name" value="rbfA"/>
    <property type="match status" value="1"/>
</dbReference>
<dbReference type="PANTHER" id="PTHR33515">
    <property type="entry name" value="RIBOSOME-BINDING FACTOR A, CHLOROPLASTIC-RELATED"/>
    <property type="match status" value="1"/>
</dbReference>
<dbReference type="PANTHER" id="PTHR33515:SF1">
    <property type="entry name" value="RIBOSOME-BINDING FACTOR A, CHLOROPLASTIC-RELATED"/>
    <property type="match status" value="1"/>
</dbReference>
<dbReference type="Pfam" id="PF02033">
    <property type="entry name" value="RBFA"/>
    <property type="match status" value="1"/>
</dbReference>
<dbReference type="SUPFAM" id="SSF89919">
    <property type="entry name" value="Ribosome-binding factor A, RbfA"/>
    <property type="match status" value="1"/>
</dbReference>
<dbReference type="PROSITE" id="PS01319">
    <property type="entry name" value="RBFA"/>
    <property type="match status" value="1"/>
</dbReference>
<name>RBFA_BARHE</name>
<sequence>MKNAEPSQRQLRVGEQVRHAVAHILQQGILLDNLLKNMVISVVEVRMSPDLKIAICFVSPLSTVHNASRADVVNALNKHSRFIRGEISHSLRQMKYMPELRFRLDNSFDNFSKIDALLRSPEVARDLHHNDKVGD</sequence>
<feature type="chain" id="PRO_0000102622" description="Ribosome-binding factor A">
    <location>
        <begin position="1"/>
        <end position="135"/>
    </location>
</feature>
<evidence type="ECO:0000255" key="1">
    <source>
        <dbReference type="HAMAP-Rule" id="MF_00003"/>
    </source>
</evidence>